<gene>
    <name type="primary">ppm1</name>
    <name type="ORF">SPBP8B7.08c</name>
</gene>
<organism>
    <name type="scientific">Schizosaccharomyces pombe (strain 972 / ATCC 24843)</name>
    <name type="common">Fission yeast</name>
    <dbReference type="NCBI Taxonomy" id="284812"/>
    <lineage>
        <taxon>Eukaryota</taxon>
        <taxon>Fungi</taxon>
        <taxon>Dikarya</taxon>
        <taxon>Ascomycota</taxon>
        <taxon>Taphrinomycotina</taxon>
        <taxon>Schizosaccharomycetes</taxon>
        <taxon>Schizosaccharomycetales</taxon>
        <taxon>Schizosaccharomycetaceae</taxon>
        <taxon>Schizosaccharomyces</taxon>
    </lineage>
</organism>
<name>LCMT1_SCHPO</name>
<feature type="chain" id="PRO_0000226132" description="Leucine carboxyl methyltransferase 1">
    <location>
        <begin position="1"/>
        <end position="310"/>
    </location>
</feature>
<feature type="binding site" evidence="1">
    <location>
        <position position="50"/>
    </location>
    <ligand>
        <name>S-adenosyl-L-methionine</name>
        <dbReference type="ChEBI" id="CHEBI:59789"/>
    </ligand>
</feature>
<feature type="binding site" evidence="1">
    <location>
        <position position="75"/>
    </location>
    <ligand>
        <name>S-adenosyl-L-methionine</name>
        <dbReference type="ChEBI" id="CHEBI:59789"/>
    </ligand>
</feature>
<feature type="binding site" evidence="1">
    <location>
        <position position="100"/>
    </location>
    <ligand>
        <name>S-adenosyl-L-methionine</name>
        <dbReference type="ChEBI" id="CHEBI:59789"/>
    </ligand>
</feature>
<feature type="binding site" evidence="1">
    <location>
        <begin position="145"/>
        <end position="146"/>
    </location>
    <ligand>
        <name>S-adenosyl-L-methionine</name>
        <dbReference type="ChEBI" id="CHEBI:59789"/>
    </ligand>
</feature>
<feature type="binding site" evidence="1">
    <location>
        <position position="169"/>
    </location>
    <ligand>
        <name>S-adenosyl-L-methionine</name>
        <dbReference type="ChEBI" id="CHEBI:59789"/>
    </ligand>
</feature>
<evidence type="ECO:0000250" key="1"/>
<evidence type="ECO:0000305" key="2"/>
<protein>
    <recommendedName>
        <fullName>Leucine carboxyl methyltransferase 1</fullName>
        <ecNumber>2.1.1.233</ecNumber>
    </recommendedName>
    <alternativeName>
        <fullName>Protein phosphatase methyltransferase 1</fullName>
    </alternativeName>
    <alternativeName>
        <fullName>[Phosphatase 2A protein]-leucine-carboxy methyltransferase 1</fullName>
    </alternativeName>
</protein>
<reference key="1">
    <citation type="journal article" date="2002" name="Nature">
        <title>The genome sequence of Schizosaccharomyces pombe.</title>
        <authorList>
            <person name="Wood V."/>
            <person name="Gwilliam R."/>
            <person name="Rajandream M.A."/>
            <person name="Lyne M.H."/>
            <person name="Lyne R."/>
            <person name="Stewart A."/>
            <person name="Sgouros J.G."/>
            <person name="Peat N."/>
            <person name="Hayles J."/>
            <person name="Baker S.G."/>
            <person name="Basham D."/>
            <person name="Bowman S."/>
            <person name="Brooks K."/>
            <person name="Brown D."/>
            <person name="Brown S."/>
            <person name="Chillingworth T."/>
            <person name="Churcher C.M."/>
            <person name="Collins M."/>
            <person name="Connor R."/>
            <person name="Cronin A."/>
            <person name="Davis P."/>
            <person name="Feltwell T."/>
            <person name="Fraser A."/>
            <person name="Gentles S."/>
            <person name="Goble A."/>
            <person name="Hamlin N."/>
            <person name="Harris D.E."/>
            <person name="Hidalgo J."/>
            <person name="Hodgson G."/>
            <person name="Holroyd S."/>
            <person name="Hornsby T."/>
            <person name="Howarth S."/>
            <person name="Huckle E.J."/>
            <person name="Hunt S."/>
            <person name="Jagels K."/>
            <person name="James K.D."/>
            <person name="Jones L."/>
            <person name="Jones M."/>
            <person name="Leather S."/>
            <person name="McDonald S."/>
            <person name="McLean J."/>
            <person name="Mooney P."/>
            <person name="Moule S."/>
            <person name="Mungall K.L."/>
            <person name="Murphy L.D."/>
            <person name="Niblett D."/>
            <person name="Odell C."/>
            <person name="Oliver K."/>
            <person name="O'Neil S."/>
            <person name="Pearson D."/>
            <person name="Quail M.A."/>
            <person name="Rabbinowitsch E."/>
            <person name="Rutherford K.M."/>
            <person name="Rutter S."/>
            <person name="Saunders D."/>
            <person name="Seeger K."/>
            <person name="Sharp S."/>
            <person name="Skelton J."/>
            <person name="Simmonds M.N."/>
            <person name="Squares R."/>
            <person name="Squares S."/>
            <person name="Stevens K."/>
            <person name="Taylor K."/>
            <person name="Taylor R.G."/>
            <person name="Tivey A."/>
            <person name="Walsh S.V."/>
            <person name="Warren T."/>
            <person name="Whitehead S."/>
            <person name="Woodward J.R."/>
            <person name="Volckaert G."/>
            <person name="Aert R."/>
            <person name="Robben J."/>
            <person name="Grymonprez B."/>
            <person name="Weltjens I."/>
            <person name="Vanstreels E."/>
            <person name="Rieger M."/>
            <person name="Schaefer M."/>
            <person name="Mueller-Auer S."/>
            <person name="Gabel C."/>
            <person name="Fuchs M."/>
            <person name="Duesterhoeft A."/>
            <person name="Fritzc C."/>
            <person name="Holzer E."/>
            <person name="Moestl D."/>
            <person name="Hilbert H."/>
            <person name="Borzym K."/>
            <person name="Langer I."/>
            <person name="Beck A."/>
            <person name="Lehrach H."/>
            <person name="Reinhardt R."/>
            <person name="Pohl T.M."/>
            <person name="Eger P."/>
            <person name="Zimmermann W."/>
            <person name="Wedler H."/>
            <person name="Wambutt R."/>
            <person name="Purnelle B."/>
            <person name="Goffeau A."/>
            <person name="Cadieu E."/>
            <person name="Dreano S."/>
            <person name="Gloux S."/>
            <person name="Lelaure V."/>
            <person name="Mottier S."/>
            <person name="Galibert F."/>
            <person name="Aves S.J."/>
            <person name="Xiang Z."/>
            <person name="Hunt C."/>
            <person name="Moore K."/>
            <person name="Hurst S.M."/>
            <person name="Lucas M."/>
            <person name="Rochet M."/>
            <person name="Gaillardin C."/>
            <person name="Tallada V.A."/>
            <person name="Garzon A."/>
            <person name="Thode G."/>
            <person name="Daga R.R."/>
            <person name="Cruzado L."/>
            <person name="Jimenez J."/>
            <person name="Sanchez M."/>
            <person name="del Rey F."/>
            <person name="Benito J."/>
            <person name="Dominguez A."/>
            <person name="Revuelta J.L."/>
            <person name="Moreno S."/>
            <person name="Armstrong J."/>
            <person name="Forsburg S.L."/>
            <person name="Cerutti L."/>
            <person name="Lowe T."/>
            <person name="McCombie W.R."/>
            <person name="Paulsen I."/>
            <person name="Potashkin J."/>
            <person name="Shpakovski G.V."/>
            <person name="Ussery D."/>
            <person name="Barrell B.G."/>
            <person name="Nurse P."/>
        </authorList>
    </citation>
    <scope>NUCLEOTIDE SEQUENCE [LARGE SCALE GENOMIC DNA]</scope>
    <source>
        <strain>972 / ATCC 24843</strain>
    </source>
</reference>
<comment type="function">
    <text evidence="1">Methylates the carboxyl group of the C-terminal leucine residue of protein phosphatase 2A catalytic subunits to form alpha-leucine ester residues.</text>
</comment>
<comment type="catalytic activity">
    <reaction>
        <text>[phosphatase 2A protein]-C-terminal L-leucine + S-adenosyl-L-methionine = [phosphatase 2A protein]-C-terminal L-leucine methyl ester + S-adenosyl-L-homocysteine</text>
        <dbReference type="Rhea" id="RHEA:48544"/>
        <dbReference type="Rhea" id="RHEA-COMP:12134"/>
        <dbReference type="Rhea" id="RHEA-COMP:12135"/>
        <dbReference type="ChEBI" id="CHEBI:57856"/>
        <dbReference type="ChEBI" id="CHEBI:59789"/>
        <dbReference type="ChEBI" id="CHEBI:90516"/>
        <dbReference type="ChEBI" id="CHEBI:90517"/>
        <dbReference type="EC" id="2.1.1.233"/>
    </reaction>
</comment>
<comment type="similarity">
    <text evidence="2">Belongs to the methyltransferase superfamily. LCMT family.</text>
</comment>
<keyword id="KW-0489">Methyltransferase</keyword>
<keyword id="KW-1185">Reference proteome</keyword>
<keyword id="KW-0949">S-adenosyl-L-methionine</keyword>
<keyword id="KW-0808">Transferase</keyword>
<dbReference type="EC" id="2.1.1.233"/>
<dbReference type="EMBL" id="CU329671">
    <property type="protein sequence ID" value="CAA21793.1"/>
    <property type="molecule type" value="Genomic_DNA"/>
</dbReference>
<dbReference type="PIR" id="T40802">
    <property type="entry name" value="T40802"/>
</dbReference>
<dbReference type="RefSeq" id="NP_596515.1">
    <property type="nucleotide sequence ID" value="NM_001022436.2"/>
</dbReference>
<dbReference type="SMR" id="O94257"/>
<dbReference type="BioGRID" id="277857">
    <property type="interactions" value="99"/>
</dbReference>
<dbReference type="FunCoup" id="O94257">
    <property type="interactions" value="353"/>
</dbReference>
<dbReference type="STRING" id="284812.O94257"/>
<dbReference type="iPTMnet" id="O94257"/>
<dbReference type="PaxDb" id="4896-SPBP8B7.08c.1"/>
<dbReference type="EnsemblFungi" id="SPBP8B7.08c.1">
    <property type="protein sequence ID" value="SPBP8B7.08c.1:pep"/>
    <property type="gene ID" value="SPBP8B7.08c"/>
</dbReference>
<dbReference type="GeneID" id="2541346"/>
<dbReference type="KEGG" id="spo:2541346"/>
<dbReference type="PomBase" id="SPBP8B7.08c">
    <property type="gene designation" value="ppm1"/>
</dbReference>
<dbReference type="VEuPathDB" id="FungiDB:SPBP8B7.08c"/>
<dbReference type="eggNOG" id="KOG2918">
    <property type="taxonomic scope" value="Eukaryota"/>
</dbReference>
<dbReference type="HOGENOM" id="CLU_031312_1_0_1"/>
<dbReference type="InParanoid" id="O94257"/>
<dbReference type="OMA" id="IIYEPIR"/>
<dbReference type="PhylomeDB" id="O94257"/>
<dbReference type="Reactome" id="R-SPO-69273">
    <property type="pathway name" value="Cyclin A/B1/B2 associated events during G2/M transition"/>
</dbReference>
<dbReference type="PRO" id="PR:O94257"/>
<dbReference type="Proteomes" id="UP000002485">
    <property type="component" value="Chromosome II"/>
</dbReference>
<dbReference type="GO" id="GO:0005739">
    <property type="term" value="C:mitochondrion"/>
    <property type="evidence" value="ECO:0007005"/>
    <property type="project" value="PomBase"/>
</dbReference>
<dbReference type="GO" id="GO:0018423">
    <property type="term" value="F:protein C-terminal leucine carboxyl O-methyltransferase activity"/>
    <property type="evidence" value="ECO:0000318"/>
    <property type="project" value="GO_Central"/>
</dbReference>
<dbReference type="GO" id="GO:0032259">
    <property type="term" value="P:methylation"/>
    <property type="evidence" value="ECO:0007669"/>
    <property type="project" value="UniProtKB-KW"/>
</dbReference>
<dbReference type="Gene3D" id="3.40.50.150">
    <property type="entry name" value="Vaccinia Virus protein VP39"/>
    <property type="match status" value="1"/>
</dbReference>
<dbReference type="InterPro" id="IPR016651">
    <property type="entry name" value="LCMT1"/>
</dbReference>
<dbReference type="InterPro" id="IPR007213">
    <property type="entry name" value="Ppm1/Ppm2/Tcmp"/>
</dbReference>
<dbReference type="InterPro" id="IPR029063">
    <property type="entry name" value="SAM-dependent_MTases_sf"/>
</dbReference>
<dbReference type="PANTHER" id="PTHR13600">
    <property type="entry name" value="LEUCINE CARBOXYL METHYLTRANSFERASE"/>
    <property type="match status" value="1"/>
</dbReference>
<dbReference type="PANTHER" id="PTHR13600:SF21">
    <property type="entry name" value="LEUCINE CARBOXYL METHYLTRANSFERASE 1"/>
    <property type="match status" value="1"/>
</dbReference>
<dbReference type="Pfam" id="PF04072">
    <property type="entry name" value="LCM"/>
    <property type="match status" value="1"/>
</dbReference>
<dbReference type="PIRSF" id="PIRSF016305">
    <property type="entry name" value="LCM_mtfrase"/>
    <property type="match status" value="1"/>
</dbReference>
<dbReference type="SUPFAM" id="SSF53335">
    <property type="entry name" value="S-adenosyl-L-methionine-dependent methyltransferases"/>
    <property type="match status" value="1"/>
</dbReference>
<proteinExistence type="inferred from homology"/>
<sequence>MDITETDLDALKCRSSATKSGYIHDPFIKFFSPSRNSHKPPIINRGTYVRTWSIDHILQKFIESFDGKKQIISLGAGTDTRVFRYISEYGPENLKFIEFDFYPNCIRKIRTIEKHEALKQNIGDYVVDISGGSLVSGSLDIYSYDIREIVHKGFPGFVDFSLPTIVLSECCLCYLEPEEASSLCRWFQNMFATSGIVVYEPIQGMDNFGKMMKANLSARGVILKTLDCYETTEQQRMRFLDYGYSEVIAEDFLTIEETWIPIEEKKRTMSIEMLDELEEWQLLAKHYCLTFAATENLWNQIILQLPHLKT</sequence>
<accession>O94257</accession>